<feature type="chain" id="PRO_0000332628" description="Ribonuclease H">
    <location>
        <begin position="1"/>
        <end position="155"/>
    </location>
</feature>
<feature type="domain" description="RNase H type-1" evidence="2">
    <location>
        <begin position="4"/>
        <end position="145"/>
    </location>
</feature>
<feature type="binding site" evidence="1">
    <location>
        <position position="13"/>
    </location>
    <ligand>
        <name>Mg(2+)</name>
        <dbReference type="ChEBI" id="CHEBI:18420"/>
        <label>1</label>
    </ligand>
</feature>
<feature type="binding site" evidence="1">
    <location>
        <position position="13"/>
    </location>
    <ligand>
        <name>Mg(2+)</name>
        <dbReference type="ChEBI" id="CHEBI:18420"/>
        <label>2</label>
    </ligand>
</feature>
<feature type="binding site" evidence="1">
    <location>
        <position position="51"/>
    </location>
    <ligand>
        <name>Mg(2+)</name>
        <dbReference type="ChEBI" id="CHEBI:18420"/>
        <label>1</label>
    </ligand>
</feature>
<feature type="binding site" evidence="1">
    <location>
        <position position="73"/>
    </location>
    <ligand>
        <name>Mg(2+)</name>
        <dbReference type="ChEBI" id="CHEBI:18420"/>
        <label>1</label>
    </ligand>
</feature>
<feature type="binding site" evidence="1">
    <location>
        <position position="137"/>
    </location>
    <ligand>
        <name>Mg(2+)</name>
        <dbReference type="ChEBI" id="CHEBI:18420"/>
        <label>2</label>
    </ligand>
</feature>
<name>RNH_METCA</name>
<reference key="1">
    <citation type="journal article" date="2004" name="PLoS Biol.">
        <title>Genomic insights into methanotrophy: the complete genome sequence of Methylococcus capsulatus (Bath).</title>
        <authorList>
            <person name="Ward N.L."/>
            <person name="Larsen O."/>
            <person name="Sakwa J."/>
            <person name="Bruseth L."/>
            <person name="Khouri H.M."/>
            <person name="Durkin A.S."/>
            <person name="Dimitrov G."/>
            <person name="Jiang L."/>
            <person name="Scanlan D."/>
            <person name="Kang K.H."/>
            <person name="Lewis M.R."/>
            <person name="Nelson K.E."/>
            <person name="Methe B.A."/>
            <person name="Wu M."/>
            <person name="Heidelberg J.F."/>
            <person name="Paulsen I.T."/>
            <person name="Fouts D.E."/>
            <person name="Ravel J."/>
            <person name="Tettelin H."/>
            <person name="Ren Q."/>
            <person name="Read T.D."/>
            <person name="DeBoy R.T."/>
            <person name="Seshadri R."/>
            <person name="Salzberg S.L."/>
            <person name="Jensen H.B."/>
            <person name="Birkeland N.K."/>
            <person name="Nelson W.C."/>
            <person name="Dodson R.J."/>
            <person name="Grindhaug S.H."/>
            <person name="Holt I.E."/>
            <person name="Eidhammer I."/>
            <person name="Jonasen I."/>
            <person name="Vanaken S."/>
            <person name="Utterback T.R."/>
            <person name="Feldblyum T.V."/>
            <person name="Fraser C.M."/>
            <person name="Lillehaug J.R."/>
            <person name="Eisen J.A."/>
        </authorList>
    </citation>
    <scope>NUCLEOTIDE SEQUENCE [LARGE SCALE GENOMIC DNA]</scope>
    <source>
        <strain>ATCC 33009 / NCIMB 11132 / Bath</strain>
    </source>
</reference>
<dbReference type="EC" id="3.1.26.4" evidence="1"/>
<dbReference type="EMBL" id="AE017282">
    <property type="protein sequence ID" value="AAU93135.1"/>
    <property type="molecule type" value="Genomic_DNA"/>
</dbReference>
<dbReference type="RefSeq" id="WP_010960057.1">
    <property type="nucleotide sequence ID" value="NC_002977.6"/>
</dbReference>
<dbReference type="SMR" id="Q60AW8"/>
<dbReference type="STRING" id="243233.MCA0719"/>
<dbReference type="GeneID" id="88223039"/>
<dbReference type="KEGG" id="mca:MCA0719"/>
<dbReference type="eggNOG" id="COG0328">
    <property type="taxonomic scope" value="Bacteria"/>
</dbReference>
<dbReference type="HOGENOM" id="CLU_030894_6_0_6"/>
<dbReference type="Proteomes" id="UP000006821">
    <property type="component" value="Chromosome"/>
</dbReference>
<dbReference type="GO" id="GO:0005737">
    <property type="term" value="C:cytoplasm"/>
    <property type="evidence" value="ECO:0007669"/>
    <property type="project" value="UniProtKB-SubCell"/>
</dbReference>
<dbReference type="GO" id="GO:0000287">
    <property type="term" value="F:magnesium ion binding"/>
    <property type="evidence" value="ECO:0007669"/>
    <property type="project" value="UniProtKB-UniRule"/>
</dbReference>
<dbReference type="GO" id="GO:0003676">
    <property type="term" value="F:nucleic acid binding"/>
    <property type="evidence" value="ECO:0007669"/>
    <property type="project" value="InterPro"/>
</dbReference>
<dbReference type="GO" id="GO:0004523">
    <property type="term" value="F:RNA-DNA hybrid ribonuclease activity"/>
    <property type="evidence" value="ECO:0007669"/>
    <property type="project" value="UniProtKB-UniRule"/>
</dbReference>
<dbReference type="GO" id="GO:0043137">
    <property type="term" value="P:DNA replication, removal of RNA primer"/>
    <property type="evidence" value="ECO:0007669"/>
    <property type="project" value="TreeGrafter"/>
</dbReference>
<dbReference type="CDD" id="cd09278">
    <property type="entry name" value="RNase_HI_prokaryote_like"/>
    <property type="match status" value="1"/>
</dbReference>
<dbReference type="FunFam" id="3.30.420.10:FF:000089">
    <property type="entry name" value="Ribonuclease H"/>
    <property type="match status" value="1"/>
</dbReference>
<dbReference type="Gene3D" id="3.30.420.10">
    <property type="entry name" value="Ribonuclease H-like superfamily/Ribonuclease H"/>
    <property type="match status" value="1"/>
</dbReference>
<dbReference type="HAMAP" id="MF_00042">
    <property type="entry name" value="RNase_H"/>
    <property type="match status" value="1"/>
</dbReference>
<dbReference type="InterPro" id="IPR050092">
    <property type="entry name" value="RNase_H"/>
</dbReference>
<dbReference type="InterPro" id="IPR012337">
    <property type="entry name" value="RNaseH-like_sf"/>
</dbReference>
<dbReference type="InterPro" id="IPR002156">
    <property type="entry name" value="RNaseH_domain"/>
</dbReference>
<dbReference type="InterPro" id="IPR036397">
    <property type="entry name" value="RNaseH_sf"/>
</dbReference>
<dbReference type="InterPro" id="IPR022892">
    <property type="entry name" value="RNaseHI"/>
</dbReference>
<dbReference type="NCBIfam" id="NF001236">
    <property type="entry name" value="PRK00203.1"/>
    <property type="match status" value="1"/>
</dbReference>
<dbReference type="PANTHER" id="PTHR10642">
    <property type="entry name" value="RIBONUCLEASE H1"/>
    <property type="match status" value="1"/>
</dbReference>
<dbReference type="PANTHER" id="PTHR10642:SF26">
    <property type="entry name" value="RIBONUCLEASE H1"/>
    <property type="match status" value="1"/>
</dbReference>
<dbReference type="Pfam" id="PF00075">
    <property type="entry name" value="RNase_H"/>
    <property type="match status" value="1"/>
</dbReference>
<dbReference type="SUPFAM" id="SSF53098">
    <property type="entry name" value="Ribonuclease H-like"/>
    <property type="match status" value="1"/>
</dbReference>
<dbReference type="PROSITE" id="PS50879">
    <property type="entry name" value="RNASE_H_1"/>
    <property type="match status" value="1"/>
</dbReference>
<evidence type="ECO:0000255" key="1">
    <source>
        <dbReference type="HAMAP-Rule" id="MF_00042"/>
    </source>
</evidence>
<evidence type="ECO:0000255" key="2">
    <source>
        <dbReference type="PROSITE-ProRule" id="PRU00408"/>
    </source>
</evidence>
<keyword id="KW-0963">Cytoplasm</keyword>
<keyword id="KW-0255">Endonuclease</keyword>
<keyword id="KW-0378">Hydrolase</keyword>
<keyword id="KW-0460">Magnesium</keyword>
<keyword id="KW-0479">Metal-binding</keyword>
<keyword id="KW-0540">Nuclease</keyword>
<keyword id="KW-1185">Reference proteome</keyword>
<sequence length="155" mass="17508">MSETEPTVYAYTDGACRGNPGPGGWGVLLRYGSKTREIYGGERETTNNRMELMAAIRALETLSRPCKVKIVTDSQYVKKGITEWVAQWEKRGWKTAGRSPVKNIDLWQRLIQAEQRHQVSWGWIKGHSGHPENEAADRLANRGIDELLQSDKIPA</sequence>
<organism>
    <name type="scientific">Methylococcus capsulatus (strain ATCC 33009 / NCIMB 11132 / Bath)</name>
    <dbReference type="NCBI Taxonomy" id="243233"/>
    <lineage>
        <taxon>Bacteria</taxon>
        <taxon>Pseudomonadati</taxon>
        <taxon>Pseudomonadota</taxon>
        <taxon>Gammaproteobacteria</taxon>
        <taxon>Methylococcales</taxon>
        <taxon>Methylococcaceae</taxon>
        <taxon>Methylococcus</taxon>
    </lineage>
</organism>
<accession>Q60AW8</accession>
<gene>
    <name evidence="1" type="primary">rnhA</name>
    <name type="ordered locus">MCA0719</name>
</gene>
<protein>
    <recommendedName>
        <fullName evidence="1">Ribonuclease H</fullName>
        <shortName evidence="1">RNase H</shortName>
        <ecNumber evidence="1">3.1.26.4</ecNumber>
    </recommendedName>
</protein>
<comment type="function">
    <text evidence="1">Endonuclease that specifically degrades the RNA of RNA-DNA hybrids.</text>
</comment>
<comment type="catalytic activity">
    <reaction evidence="1">
        <text>Endonucleolytic cleavage to 5'-phosphomonoester.</text>
        <dbReference type="EC" id="3.1.26.4"/>
    </reaction>
</comment>
<comment type="cofactor">
    <cofactor evidence="1">
        <name>Mg(2+)</name>
        <dbReference type="ChEBI" id="CHEBI:18420"/>
    </cofactor>
    <text evidence="1">Binds 1 Mg(2+) ion per subunit. May bind a second metal ion at a regulatory site, or after substrate binding.</text>
</comment>
<comment type="subunit">
    <text evidence="1">Monomer.</text>
</comment>
<comment type="subcellular location">
    <subcellularLocation>
        <location evidence="1">Cytoplasm</location>
    </subcellularLocation>
</comment>
<comment type="similarity">
    <text evidence="1">Belongs to the RNase H family.</text>
</comment>
<proteinExistence type="inferred from homology"/>